<gene>
    <name evidence="1" type="primary">plsY</name>
    <name type="ordered locus">Tbd_2382</name>
</gene>
<reference key="1">
    <citation type="journal article" date="2006" name="J. Bacteriol.">
        <title>The genome sequence of the obligately chemolithoautotrophic, facultatively anaerobic bacterium Thiobacillus denitrificans.</title>
        <authorList>
            <person name="Beller H.R."/>
            <person name="Chain P.S."/>
            <person name="Letain T.E."/>
            <person name="Chakicherla A."/>
            <person name="Larimer F.W."/>
            <person name="Richardson P.M."/>
            <person name="Coleman M.A."/>
            <person name="Wood A.P."/>
            <person name="Kelly D.P."/>
        </authorList>
    </citation>
    <scope>NUCLEOTIDE SEQUENCE [LARGE SCALE GENOMIC DNA]</scope>
    <source>
        <strain>ATCC 25259 / T1</strain>
    </source>
</reference>
<organism>
    <name type="scientific">Thiobacillus denitrificans (strain ATCC 25259 / T1)</name>
    <dbReference type="NCBI Taxonomy" id="292415"/>
    <lineage>
        <taxon>Bacteria</taxon>
        <taxon>Pseudomonadati</taxon>
        <taxon>Pseudomonadota</taxon>
        <taxon>Betaproteobacteria</taxon>
        <taxon>Nitrosomonadales</taxon>
        <taxon>Thiobacillaceae</taxon>
        <taxon>Thiobacillus</taxon>
    </lineage>
</organism>
<evidence type="ECO:0000255" key="1">
    <source>
        <dbReference type="HAMAP-Rule" id="MF_01043"/>
    </source>
</evidence>
<accession>Q3SGB5</accession>
<keyword id="KW-0997">Cell inner membrane</keyword>
<keyword id="KW-1003">Cell membrane</keyword>
<keyword id="KW-0444">Lipid biosynthesis</keyword>
<keyword id="KW-0443">Lipid metabolism</keyword>
<keyword id="KW-0472">Membrane</keyword>
<keyword id="KW-0594">Phospholipid biosynthesis</keyword>
<keyword id="KW-1208">Phospholipid metabolism</keyword>
<keyword id="KW-1185">Reference proteome</keyword>
<keyword id="KW-0808">Transferase</keyword>
<keyword id="KW-0812">Transmembrane</keyword>
<keyword id="KW-1133">Transmembrane helix</keyword>
<comment type="function">
    <text evidence="1">Catalyzes the transfer of an acyl group from acyl-phosphate (acyl-PO(4)) to glycerol-3-phosphate (G3P) to form lysophosphatidic acid (LPA). This enzyme utilizes acyl-phosphate as fatty acyl donor, but not acyl-CoA or acyl-ACP.</text>
</comment>
<comment type="catalytic activity">
    <reaction evidence="1">
        <text>an acyl phosphate + sn-glycerol 3-phosphate = a 1-acyl-sn-glycero-3-phosphate + phosphate</text>
        <dbReference type="Rhea" id="RHEA:34075"/>
        <dbReference type="ChEBI" id="CHEBI:43474"/>
        <dbReference type="ChEBI" id="CHEBI:57597"/>
        <dbReference type="ChEBI" id="CHEBI:57970"/>
        <dbReference type="ChEBI" id="CHEBI:59918"/>
        <dbReference type="EC" id="2.3.1.275"/>
    </reaction>
</comment>
<comment type="pathway">
    <text evidence="1">Lipid metabolism; phospholipid metabolism.</text>
</comment>
<comment type="subunit">
    <text evidence="1">Probably interacts with PlsX.</text>
</comment>
<comment type="subcellular location">
    <subcellularLocation>
        <location evidence="1">Cell inner membrane</location>
        <topology evidence="1">Multi-pass membrane protein</topology>
    </subcellularLocation>
</comment>
<comment type="similarity">
    <text evidence="1">Belongs to the PlsY family.</text>
</comment>
<name>PLSY_THIDA</name>
<protein>
    <recommendedName>
        <fullName evidence="1">Glycerol-3-phosphate acyltransferase</fullName>
    </recommendedName>
    <alternativeName>
        <fullName evidence="1">Acyl-PO4 G3P acyltransferase</fullName>
    </alternativeName>
    <alternativeName>
        <fullName evidence="1">Acyl-phosphate--glycerol-3-phosphate acyltransferase</fullName>
    </alternativeName>
    <alternativeName>
        <fullName evidence="1">G3P acyltransferase</fullName>
        <shortName evidence="1">GPAT</shortName>
        <ecNumber evidence="1">2.3.1.275</ecNumber>
    </alternativeName>
    <alternativeName>
        <fullName evidence="1">Lysophosphatidic acid synthase</fullName>
        <shortName evidence="1">LPA synthase</shortName>
    </alternativeName>
</protein>
<proteinExistence type="inferred from homology"/>
<feature type="chain" id="PRO_0000188483" description="Glycerol-3-phosphate acyltransferase">
    <location>
        <begin position="1"/>
        <end position="200"/>
    </location>
</feature>
<feature type="transmembrane region" description="Helical" evidence="1">
    <location>
        <begin position="2"/>
        <end position="22"/>
    </location>
</feature>
<feature type="transmembrane region" description="Helical" evidence="1">
    <location>
        <begin position="51"/>
        <end position="71"/>
    </location>
</feature>
<feature type="transmembrane region" description="Helical" evidence="1">
    <location>
        <begin position="84"/>
        <end position="104"/>
    </location>
</feature>
<feature type="transmembrane region" description="Helical" evidence="1">
    <location>
        <begin position="113"/>
        <end position="133"/>
    </location>
</feature>
<feature type="transmembrane region" description="Helical" evidence="1">
    <location>
        <begin position="143"/>
        <end position="163"/>
    </location>
</feature>
<dbReference type="EC" id="2.3.1.275" evidence="1"/>
<dbReference type="EMBL" id="CP000116">
    <property type="protein sequence ID" value="AAZ98335.1"/>
    <property type="molecule type" value="Genomic_DNA"/>
</dbReference>
<dbReference type="RefSeq" id="WP_011312894.1">
    <property type="nucleotide sequence ID" value="NC_007404.1"/>
</dbReference>
<dbReference type="SMR" id="Q3SGB5"/>
<dbReference type="STRING" id="292415.Tbd_2382"/>
<dbReference type="KEGG" id="tbd:Tbd_2382"/>
<dbReference type="eggNOG" id="COG0344">
    <property type="taxonomic scope" value="Bacteria"/>
</dbReference>
<dbReference type="HOGENOM" id="CLU_081254_0_0_4"/>
<dbReference type="OrthoDB" id="9777124at2"/>
<dbReference type="UniPathway" id="UPA00085"/>
<dbReference type="Proteomes" id="UP000008291">
    <property type="component" value="Chromosome"/>
</dbReference>
<dbReference type="GO" id="GO:0005886">
    <property type="term" value="C:plasma membrane"/>
    <property type="evidence" value="ECO:0007669"/>
    <property type="project" value="UniProtKB-SubCell"/>
</dbReference>
<dbReference type="GO" id="GO:0043772">
    <property type="term" value="F:acyl-phosphate glycerol-3-phosphate acyltransferase activity"/>
    <property type="evidence" value="ECO:0007669"/>
    <property type="project" value="UniProtKB-UniRule"/>
</dbReference>
<dbReference type="GO" id="GO:0008654">
    <property type="term" value="P:phospholipid biosynthetic process"/>
    <property type="evidence" value="ECO:0007669"/>
    <property type="project" value="UniProtKB-UniRule"/>
</dbReference>
<dbReference type="HAMAP" id="MF_01043">
    <property type="entry name" value="PlsY"/>
    <property type="match status" value="1"/>
</dbReference>
<dbReference type="InterPro" id="IPR003811">
    <property type="entry name" value="G3P_acylTferase_PlsY"/>
</dbReference>
<dbReference type="NCBIfam" id="TIGR00023">
    <property type="entry name" value="glycerol-3-phosphate 1-O-acyltransferase PlsY"/>
    <property type="match status" value="1"/>
</dbReference>
<dbReference type="PANTHER" id="PTHR30309:SF0">
    <property type="entry name" value="GLYCEROL-3-PHOSPHATE ACYLTRANSFERASE-RELATED"/>
    <property type="match status" value="1"/>
</dbReference>
<dbReference type="PANTHER" id="PTHR30309">
    <property type="entry name" value="INNER MEMBRANE PROTEIN YGIH"/>
    <property type="match status" value="1"/>
</dbReference>
<dbReference type="Pfam" id="PF02660">
    <property type="entry name" value="G3P_acyltransf"/>
    <property type="match status" value="1"/>
</dbReference>
<dbReference type="SMART" id="SM01207">
    <property type="entry name" value="G3P_acyltransf"/>
    <property type="match status" value="1"/>
</dbReference>
<sequence>MIHLLLVVAAYLLGSLSFAVIVSRAMGLPDPRSFGSGNPGATNVLRTGRKTAAILTLLGDALKGWVAVVAARGLAAQFGLDDDIVLLCALAAFIGHLFPVFFGFQGGKGVATALGILVALDPWLGLACLATWVAMALVFRISSLSALVTAVLAPVYAGLLLGWNDSATTVLVIALLLVYRHKANLLKLVTGQEARIGKRS</sequence>